<keyword id="KW-0143">Chaperone</keyword>
<keyword id="KW-0963">Cytoplasm</keyword>
<keyword id="KW-1185">Reference proteome</keyword>
<name>CH103_BRADU</name>
<organism>
    <name type="scientific">Bradyrhizobium diazoefficiens (strain JCM 10833 / BCRC 13528 / IAM 13628 / NBRC 14792 / USDA 110)</name>
    <dbReference type="NCBI Taxonomy" id="224911"/>
    <lineage>
        <taxon>Bacteria</taxon>
        <taxon>Pseudomonadati</taxon>
        <taxon>Pseudomonadota</taxon>
        <taxon>Alphaproteobacteria</taxon>
        <taxon>Hyphomicrobiales</taxon>
        <taxon>Nitrobacteraceae</taxon>
        <taxon>Bradyrhizobium</taxon>
    </lineage>
</organism>
<protein>
    <recommendedName>
        <fullName evidence="1">Co-chaperonin GroES 3</fullName>
    </recommendedName>
    <alternativeName>
        <fullName evidence="1">10 kDa chaperonin 3</fullName>
    </alternativeName>
    <alternativeName>
        <fullName evidence="1">Chaperonin-10 3</fullName>
        <shortName evidence="1">Cpn10 3</shortName>
    </alternativeName>
</protein>
<comment type="function">
    <text evidence="1">Together with the chaperonin GroEL, plays an essential role in assisting protein folding. The GroEL-GroES system forms a nano-cage that allows encapsulation of the non-native substrate proteins and provides a physical environment optimized to promote and accelerate protein folding. GroES binds to the apical surface of the GroEL ring, thereby capping the opening of the GroEL channel.</text>
</comment>
<comment type="subunit">
    <text evidence="1">Heptamer of 7 subunits arranged in a ring. Interacts with the chaperonin GroEL.</text>
</comment>
<comment type="subcellular location">
    <subcellularLocation>
        <location evidence="1">Cytoplasm</location>
    </subcellularLocation>
</comment>
<comment type="induction">
    <text>By NifA.</text>
</comment>
<comment type="similarity">
    <text evidence="1 2">Belongs to the GroES chaperonin family.</text>
</comment>
<dbReference type="EMBL" id="Z22603">
    <property type="protein sequence ID" value="CAA80315.1"/>
    <property type="molecule type" value="Genomic_DNA"/>
</dbReference>
<dbReference type="EMBL" id="AH010242">
    <property type="protein sequence ID" value="AAG61030.1"/>
    <property type="molecule type" value="Genomic_DNA"/>
</dbReference>
<dbReference type="EMBL" id="BA000040">
    <property type="protein sequence ID" value="BAC47325.1"/>
    <property type="molecule type" value="Genomic_DNA"/>
</dbReference>
<dbReference type="PIR" id="S35310">
    <property type="entry name" value="S35310"/>
</dbReference>
<dbReference type="RefSeq" id="NP_768700.1">
    <property type="nucleotide sequence ID" value="NC_004463.1"/>
</dbReference>
<dbReference type="RefSeq" id="WP_011084856.1">
    <property type="nucleotide sequence ID" value="NZ_CP011360.1"/>
</dbReference>
<dbReference type="SMR" id="P35864"/>
<dbReference type="FunCoup" id="P35864">
    <property type="interactions" value="715"/>
</dbReference>
<dbReference type="STRING" id="224911.AAV28_07130"/>
<dbReference type="EnsemblBacteria" id="BAC47325">
    <property type="protein sequence ID" value="BAC47325"/>
    <property type="gene ID" value="BAC47325"/>
</dbReference>
<dbReference type="KEGG" id="bja:bll2060"/>
<dbReference type="PATRIC" id="fig|224911.44.peg.1565"/>
<dbReference type="eggNOG" id="COG0234">
    <property type="taxonomic scope" value="Bacteria"/>
</dbReference>
<dbReference type="HOGENOM" id="CLU_132825_1_0_5"/>
<dbReference type="InParanoid" id="P35864"/>
<dbReference type="OrthoDB" id="9806791at2"/>
<dbReference type="PhylomeDB" id="P35864"/>
<dbReference type="Proteomes" id="UP000002526">
    <property type="component" value="Chromosome"/>
</dbReference>
<dbReference type="GO" id="GO:0005737">
    <property type="term" value="C:cytoplasm"/>
    <property type="evidence" value="ECO:0007669"/>
    <property type="project" value="UniProtKB-SubCell"/>
</dbReference>
<dbReference type="GO" id="GO:0005524">
    <property type="term" value="F:ATP binding"/>
    <property type="evidence" value="ECO:0007669"/>
    <property type="project" value="InterPro"/>
</dbReference>
<dbReference type="GO" id="GO:0046872">
    <property type="term" value="F:metal ion binding"/>
    <property type="evidence" value="ECO:0000318"/>
    <property type="project" value="GO_Central"/>
</dbReference>
<dbReference type="GO" id="GO:0044183">
    <property type="term" value="F:protein folding chaperone"/>
    <property type="evidence" value="ECO:0007669"/>
    <property type="project" value="InterPro"/>
</dbReference>
<dbReference type="GO" id="GO:0051087">
    <property type="term" value="F:protein-folding chaperone binding"/>
    <property type="evidence" value="ECO:0000318"/>
    <property type="project" value="GO_Central"/>
</dbReference>
<dbReference type="GO" id="GO:0051082">
    <property type="term" value="F:unfolded protein binding"/>
    <property type="evidence" value="ECO:0000318"/>
    <property type="project" value="GO_Central"/>
</dbReference>
<dbReference type="GO" id="GO:0051085">
    <property type="term" value="P:chaperone cofactor-dependent protein refolding"/>
    <property type="evidence" value="ECO:0000318"/>
    <property type="project" value="GO_Central"/>
</dbReference>
<dbReference type="CDD" id="cd00320">
    <property type="entry name" value="cpn10"/>
    <property type="match status" value="1"/>
</dbReference>
<dbReference type="FunFam" id="2.30.33.40:FF:000001">
    <property type="entry name" value="10 kDa chaperonin"/>
    <property type="match status" value="1"/>
</dbReference>
<dbReference type="Gene3D" id="2.30.33.40">
    <property type="entry name" value="GroES chaperonin"/>
    <property type="match status" value="1"/>
</dbReference>
<dbReference type="HAMAP" id="MF_00580">
    <property type="entry name" value="CH10"/>
    <property type="match status" value="1"/>
</dbReference>
<dbReference type="InterPro" id="IPR020818">
    <property type="entry name" value="Chaperonin_GroES"/>
</dbReference>
<dbReference type="InterPro" id="IPR037124">
    <property type="entry name" value="Chaperonin_GroES_sf"/>
</dbReference>
<dbReference type="InterPro" id="IPR018369">
    <property type="entry name" value="Chaprnonin_Cpn10_CS"/>
</dbReference>
<dbReference type="InterPro" id="IPR011032">
    <property type="entry name" value="GroES-like_sf"/>
</dbReference>
<dbReference type="NCBIfam" id="NF001527">
    <property type="entry name" value="PRK00364.1-2"/>
    <property type="match status" value="1"/>
</dbReference>
<dbReference type="NCBIfam" id="NF001529">
    <property type="entry name" value="PRK00364.1-5"/>
    <property type="match status" value="1"/>
</dbReference>
<dbReference type="NCBIfam" id="NF001531">
    <property type="entry name" value="PRK00364.2-2"/>
    <property type="match status" value="1"/>
</dbReference>
<dbReference type="NCBIfam" id="NF001533">
    <property type="entry name" value="PRK00364.2-4"/>
    <property type="match status" value="1"/>
</dbReference>
<dbReference type="PANTHER" id="PTHR10772">
    <property type="entry name" value="10 KDA HEAT SHOCK PROTEIN"/>
    <property type="match status" value="1"/>
</dbReference>
<dbReference type="PANTHER" id="PTHR10772:SF58">
    <property type="entry name" value="CO-CHAPERONIN GROES"/>
    <property type="match status" value="1"/>
</dbReference>
<dbReference type="Pfam" id="PF00166">
    <property type="entry name" value="Cpn10"/>
    <property type="match status" value="1"/>
</dbReference>
<dbReference type="PRINTS" id="PR00297">
    <property type="entry name" value="CHAPERONIN10"/>
</dbReference>
<dbReference type="SMART" id="SM00883">
    <property type="entry name" value="Cpn10"/>
    <property type="match status" value="1"/>
</dbReference>
<dbReference type="SUPFAM" id="SSF50129">
    <property type="entry name" value="GroES-like"/>
    <property type="match status" value="1"/>
</dbReference>
<dbReference type="PROSITE" id="PS00681">
    <property type="entry name" value="CHAPERONINS_CPN10"/>
    <property type="match status" value="1"/>
</dbReference>
<proteinExistence type="evidence at transcript level"/>
<gene>
    <name evidence="1" type="primary">groES3</name>
    <name evidence="1" type="synonym">groS3</name>
    <name type="ordered locus">bll2060</name>
</gene>
<accession>P35864</accession>
<reference key="1">
    <citation type="journal article" date="1993" name="EMBO J.">
        <title>One member of a gro-ESL-like chaperonin multigene family in Bradyrhizobium japonicum is co-regulated with symbiotic nitrogen fixation genes.</title>
        <authorList>
            <person name="Fischer H.-M."/>
            <person name="Babst M."/>
            <person name="Kaspar T."/>
            <person name="Acuna G."/>
            <person name="Arigoni F."/>
            <person name="Hennecke H."/>
        </authorList>
    </citation>
    <scope>NUCLEOTIDE SEQUENCE [GENOMIC DNA]</scope>
    <source>
        <strain>USDA 110spc4</strain>
    </source>
</reference>
<reference key="2">
    <citation type="journal article" date="2001" name="J. Bacteriol.">
        <title>Potential symbiosis-specific genes uncovered by sequencing a 410-kb DNA region of the Bradyrhizobium japonicum chromosome.</title>
        <authorList>
            <person name="Goettfert M."/>
            <person name="Roethlisberger S."/>
            <person name="Kuendig C."/>
            <person name="Beck C."/>
            <person name="Marty R."/>
            <person name="Hennecke H."/>
        </authorList>
    </citation>
    <scope>NUCLEOTIDE SEQUENCE [GENOMIC DNA]</scope>
    <source>
        <strain>USDA 110spc4</strain>
    </source>
</reference>
<reference key="3">
    <citation type="journal article" date="2002" name="DNA Res.">
        <title>Complete genomic sequence of nitrogen-fixing symbiotic bacterium Bradyrhizobium japonicum USDA110.</title>
        <authorList>
            <person name="Kaneko T."/>
            <person name="Nakamura Y."/>
            <person name="Sato S."/>
            <person name="Minamisawa K."/>
            <person name="Uchiumi T."/>
            <person name="Sasamoto S."/>
            <person name="Watanabe A."/>
            <person name="Idesawa K."/>
            <person name="Iriguchi M."/>
            <person name="Kawashima K."/>
            <person name="Kohara M."/>
            <person name="Matsumoto M."/>
            <person name="Shimpo S."/>
            <person name="Tsuruoka H."/>
            <person name="Wada T."/>
            <person name="Yamada M."/>
            <person name="Tabata S."/>
        </authorList>
    </citation>
    <scope>NUCLEOTIDE SEQUENCE [LARGE SCALE GENOMIC DNA]</scope>
    <source>
        <strain>JCM 10833 / BCRC 13528 / IAM 13628 / NBRC 14792 / USDA 110</strain>
    </source>
</reference>
<feature type="chain" id="PRO_0000174707" description="Co-chaperonin GroES 3">
    <location>
        <begin position="1"/>
        <end position="104"/>
    </location>
</feature>
<sequence>MKFRPLHDRVVVKRIDAEEKTAGGIIIPDTAKEKPSQGEVIAVGPGGHDDSGKLIPIDIEVGDRVLFGKWSGTEVKIDGQDLLIMKESDVMGVLTDVFSKKKAA</sequence>
<evidence type="ECO:0000255" key="1">
    <source>
        <dbReference type="HAMAP-Rule" id="MF_00580"/>
    </source>
</evidence>
<evidence type="ECO:0000305" key="2"/>